<evidence type="ECO:0000255" key="1">
    <source>
        <dbReference type="HAMAP-Rule" id="MF_00093"/>
    </source>
</evidence>
<evidence type="ECO:0000256" key="2">
    <source>
        <dbReference type="SAM" id="MobiDB-lite"/>
    </source>
</evidence>
<feature type="chain" id="PRO_1000071264" description="Peptide chain release factor 1">
    <location>
        <begin position="1"/>
        <end position="355"/>
    </location>
</feature>
<feature type="region of interest" description="Disordered" evidence="2">
    <location>
        <begin position="280"/>
        <end position="299"/>
    </location>
</feature>
<feature type="modified residue" description="N5-methylglutamine" evidence="1">
    <location>
        <position position="229"/>
    </location>
</feature>
<comment type="function">
    <text evidence="1">Peptide chain release factor 1 directs the termination of translation in response to the peptide chain termination codons UAG and UAA.</text>
</comment>
<comment type="subcellular location">
    <subcellularLocation>
        <location evidence="1">Cytoplasm</location>
    </subcellularLocation>
</comment>
<comment type="PTM">
    <text evidence="1">Methylated by PrmC. Methylation increases the termination efficiency of RF1.</text>
</comment>
<comment type="similarity">
    <text evidence="1">Belongs to the prokaryotic/mitochondrial release factor family.</text>
</comment>
<reference key="1">
    <citation type="journal article" date="2011" name="Stand. Genomic Sci.">
        <title>Complete genome sequence of Parvibaculum lavamentivorans type strain (DS-1(T)).</title>
        <authorList>
            <person name="Schleheck D."/>
            <person name="Weiss M."/>
            <person name="Pitluck S."/>
            <person name="Bruce D."/>
            <person name="Land M.L."/>
            <person name="Han S."/>
            <person name="Saunders E."/>
            <person name="Tapia R."/>
            <person name="Detter C."/>
            <person name="Brettin T."/>
            <person name="Han J."/>
            <person name="Woyke T."/>
            <person name="Goodwin L."/>
            <person name="Pennacchio L."/>
            <person name="Nolan M."/>
            <person name="Cook A.M."/>
            <person name="Kjelleberg S."/>
            <person name="Thomas T."/>
        </authorList>
    </citation>
    <scope>NUCLEOTIDE SEQUENCE [LARGE SCALE GENOMIC DNA]</scope>
    <source>
        <strain>DS-1 / DSM 13023 / NCIMB 13966</strain>
    </source>
</reference>
<proteinExistence type="inferred from homology"/>
<gene>
    <name evidence="1" type="primary">prfA</name>
    <name type="ordered locus">Plav_1747</name>
</gene>
<protein>
    <recommendedName>
        <fullName evidence="1">Peptide chain release factor 1</fullName>
        <shortName evidence="1">RF-1</shortName>
    </recommendedName>
</protein>
<organism>
    <name type="scientific">Parvibaculum lavamentivorans (strain DS-1 / DSM 13023 / NCIMB 13966)</name>
    <dbReference type="NCBI Taxonomy" id="402881"/>
    <lineage>
        <taxon>Bacteria</taxon>
        <taxon>Pseudomonadati</taxon>
        <taxon>Pseudomonadota</taxon>
        <taxon>Alphaproteobacteria</taxon>
        <taxon>Hyphomicrobiales</taxon>
        <taxon>Parvibaculaceae</taxon>
        <taxon>Parvibaculum</taxon>
    </lineage>
</organism>
<name>RF1_PARL1</name>
<keyword id="KW-0963">Cytoplasm</keyword>
<keyword id="KW-0488">Methylation</keyword>
<keyword id="KW-0648">Protein biosynthesis</keyword>
<keyword id="KW-1185">Reference proteome</keyword>
<dbReference type="EMBL" id="CP000774">
    <property type="protein sequence ID" value="ABS63366.1"/>
    <property type="molecule type" value="Genomic_DNA"/>
</dbReference>
<dbReference type="RefSeq" id="WP_012110659.1">
    <property type="nucleotide sequence ID" value="NC_009719.1"/>
</dbReference>
<dbReference type="SMR" id="A7HTY3"/>
<dbReference type="STRING" id="402881.Plav_1747"/>
<dbReference type="KEGG" id="pla:Plav_1747"/>
<dbReference type="eggNOG" id="COG0216">
    <property type="taxonomic scope" value="Bacteria"/>
</dbReference>
<dbReference type="HOGENOM" id="CLU_036856_0_1_5"/>
<dbReference type="OrthoDB" id="9806673at2"/>
<dbReference type="Proteomes" id="UP000006377">
    <property type="component" value="Chromosome"/>
</dbReference>
<dbReference type="GO" id="GO:0005737">
    <property type="term" value="C:cytoplasm"/>
    <property type="evidence" value="ECO:0007669"/>
    <property type="project" value="UniProtKB-SubCell"/>
</dbReference>
<dbReference type="GO" id="GO:0016149">
    <property type="term" value="F:translation release factor activity, codon specific"/>
    <property type="evidence" value="ECO:0007669"/>
    <property type="project" value="UniProtKB-UniRule"/>
</dbReference>
<dbReference type="FunFam" id="3.30.160.20:FF:000004">
    <property type="entry name" value="Peptide chain release factor 1"/>
    <property type="match status" value="1"/>
</dbReference>
<dbReference type="FunFam" id="3.30.70.1660:FF:000002">
    <property type="entry name" value="Peptide chain release factor 1"/>
    <property type="match status" value="1"/>
</dbReference>
<dbReference type="FunFam" id="3.30.70.1660:FF:000004">
    <property type="entry name" value="Peptide chain release factor 1"/>
    <property type="match status" value="1"/>
</dbReference>
<dbReference type="Gene3D" id="3.30.160.20">
    <property type="match status" value="1"/>
</dbReference>
<dbReference type="Gene3D" id="3.30.70.1660">
    <property type="match status" value="1"/>
</dbReference>
<dbReference type="Gene3D" id="6.10.140.1950">
    <property type="match status" value="1"/>
</dbReference>
<dbReference type="HAMAP" id="MF_00093">
    <property type="entry name" value="Rel_fac_1"/>
    <property type="match status" value="1"/>
</dbReference>
<dbReference type="InterPro" id="IPR005139">
    <property type="entry name" value="PCRF"/>
</dbReference>
<dbReference type="InterPro" id="IPR000352">
    <property type="entry name" value="Pep_chain_release_fac_I"/>
</dbReference>
<dbReference type="InterPro" id="IPR045853">
    <property type="entry name" value="Pep_chain_release_fac_I_sf"/>
</dbReference>
<dbReference type="InterPro" id="IPR050057">
    <property type="entry name" value="Prokaryotic/Mito_RF"/>
</dbReference>
<dbReference type="InterPro" id="IPR004373">
    <property type="entry name" value="RF-1"/>
</dbReference>
<dbReference type="NCBIfam" id="TIGR00019">
    <property type="entry name" value="prfA"/>
    <property type="match status" value="1"/>
</dbReference>
<dbReference type="NCBIfam" id="NF001859">
    <property type="entry name" value="PRK00591.1"/>
    <property type="match status" value="1"/>
</dbReference>
<dbReference type="PANTHER" id="PTHR43804">
    <property type="entry name" value="LD18447P"/>
    <property type="match status" value="1"/>
</dbReference>
<dbReference type="PANTHER" id="PTHR43804:SF7">
    <property type="entry name" value="LD18447P"/>
    <property type="match status" value="1"/>
</dbReference>
<dbReference type="Pfam" id="PF03462">
    <property type="entry name" value="PCRF"/>
    <property type="match status" value="1"/>
</dbReference>
<dbReference type="Pfam" id="PF00472">
    <property type="entry name" value="RF-1"/>
    <property type="match status" value="1"/>
</dbReference>
<dbReference type="SMART" id="SM00937">
    <property type="entry name" value="PCRF"/>
    <property type="match status" value="1"/>
</dbReference>
<dbReference type="SUPFAM" id="SSF75620">
    <property type="entry name" value="Release factor"/>
    <property type="match status" value="1"/>
</dbReference>
<dbReference type="PROSITE" id="PS00745">
    <property type="entry name" value="RF_PROK_I"/>
    <property type="match status" value="1"/>
</dbReference>
<sequence length="355" mass="39453">MIPEERLQSVIARFEAVQSEMNSDVPRDRFVALSKEFSELEPVAAAIGHLLARRREYADAEQLLRVRDMAEMAKEEIARLNEELPRLEHEVQLMLLPKDAADDRNVILEVRAGTGGDEAALFAGDLFRMYERYASNQGWKVELIAASEGEMGGYKEIIAGISGPGVYAKLKFESGVHRVQRVPVTEGGGRIHTSAATVAVLPEAEEVDVEIEDKDLRIDVYRASGAGGQHVNKTESAVRITHLPTGIVVAQQDEKSQHKNKARAMQILRARIFDAERERLDRERSAARKGQVGSGDRSERIRTYNFPQSRVTDHRINLTLHKLDQVLEGEALGELIDALIAEDQAARLAAMGDEA</sequence>
<accession>A7HTY3</accession>